<name>GCSPB_BACC1</name>
<dbReference type="EC" id="1.4.4.2" evidence="1"/>
<dbReference type="EMBL" id="AE017194">
    <property type="protein sequence ID" value="AAS43204.1"/>
    <property type="molecule type" value="Genomic_DNA"/>
</dbReference>
<dbReference type="SMR" id="P62029"/>
<dbReference type="KEGG" id="bca:BCE_4303"/>
<dbReference type="HOGENOM" id="CLU_004620_5_0_9"/>
<dbReference type="Proteomes" id="UP000002527">
    <property type="component" value="Chromosome"/>
</dbReference>
<dbReference type="GO" id="GO:0005829">
    <property type="term" value="C:cytosol"/>
    <property type="evidence" value="ECO:0007669"/>
    <property type="project" value="TreeGrafter"/>
</dbReference>
<dbReference type="GO" id="GO:0005960">
    <property type="term" value="C:glycine cleavage complex"/>
    <property type="evidence" value="ECO:0007669"/>
    <property type="project" value="TreeGrafter"/>
</dbReference>
<dbReference type="GO" id="GO:0016594">
    <property type="term" value="F:glycine binding"/>
    <property type="evidence" value="ECO:0007669"/>
    <property type="project" value="TreeGrafter"/>
</dbReference>
<dbReference type="GO" id="GO:0004375">
    <property type="term" value="F:glycine dehydrogenase (decarboxylating) activity"/>
    <property type="evidence" value="ECO:0007669"/>
    <property type="project" value="UniProtKB-EC"/>
</dbReference>
<dbReference type="GO" id="GO:0030170">
    <property type="term" value="F:pyridoxal phosphate binding"/>
    <property type="evidence" value="ECO:0007669"/>
    <property type="project" value="TreeGrafter"/>
</dbReference>
<dbReference type="GO" id="GO:0019464">
    <property type="term" value="P:glycine decarboxylation via glycine cleavage system"/>
    <property type="evidence" value="ECO:0007669"/>
    <property type="project" value="UniProtKB-UniRule"/>
</dbReference>
<dbReference type="CDD" id="cd00613">
    <property type="entry name" value="GDC-P"/>
    <property type="match status" value="1"/>
</dbReference>
<dbReference type="FunFam" id="3.40.640.10:FF:000034">
    <property type="entry name" value="Probable glycine dehydrogenase (decarboxylating) subunit 2"/>
    <property type="match status" value="1"/>
</dbReference>
<dbReference type="FunFam" id="3.90.1150.10:FF:000014">
    <property type="entry name" value="Probable glycine dehydrogenase (decarboxylating) subunit 2"/>
    <property type="match status" value="1"/>
</dbReference>
<dbReference type="Gene3D" id="6.20.440.10">
    <property type="match status" value="1"/>
</dbReference>
<dbReference type="Gene3D" id="3.90.1150.10">
    <property type="entry name" value="Aspartate Aminotransferase, domain 1"/>
    <property type="match status" value="1"/>
</dbReference>
<dbReference type="Gene3D" id="3.40.640.10">
    <property type="entry name" value="Type I PLP-dependent aspartate aminotransferase-like (Major domain)"/>
    <property type="match status" value="1"/>
</dbReference>
<dbReference type="HAMAP" id="MF_00713">
    <property type="entry name" value="GcvPB"/>
    <property type="match status" value="1"/>
</dbReference>
<dbReference type="InterPro" id="IPR023012">
    <property type="entry name" value="GcvPB"/>
</dbReference>
<dbReference type="InterPro" id="IPR049316">
    <property type="entry name" value="GDC-P_C"/>
</dbReference>
<dbReference type="InterPro" id="IPR049315">
    <property type="entry name" value="GDC-P_N"/>
</dbReference>
<dbReference type="InterPro" id="IPR020581">
    <property type="entry name" value="GDC_P"/>
</dbReference>
<dbReference type="InterPro" id="IPR015424">
    <property type="entry name" value="PyrdxlP-dep_Trfase"/>
</dbReference>
<dbReference type="InterPro" id="IPR015421">
    <property type="entry name" value="PyrdxlP-dep_Trfase_major"/>
</dbReference>
<dbReference type="InterPro" id="IPR015422">
    <property type="entry name" value="PyrdxlP-dep_Trfase_small"/>
</dbReference>
<dbReference type="NCBIfam" id="NF003346">
    <property type="entry name" value="PRK04366.1"/>
    <property type="match status" value="1"/>
</dbReference>
<dbReference type="PANTHER" id="PTHR11773:SF1">
    <property type="entry name" value="GLYCINE DEHYDROGENASE (DECARBOXYLATING), MITOCHONDRIAL"/>
    <property type="match status" value="1"/>
</dbReference>
<dbReference type="PANTHER" id="PTHR11773">
    <property type="entry name" value="GLYCINE DEHYDROGENASE, DECARBOXYLATING"/>
    <property type="match status" value="1"/>
</dbReference>
<dbReference type="Pfam" id="PF21478">
    <property type="entry name" value="GcvP2_C"/>
    <property type="match status" value="1"/>
</dbReference>
<dbReference type="Pfam" id="PF02347">
    <property type="entry name" value="GDC-P"/>
    <property type="match status" value="1"/>
</dbReference>
<dbReference type="SUPFAM" id="SSF53383">
    <property type="entry name" value="PLP-dependent transferases"/>
    <property type="match status" value="1"/>
</dbReference>
<evidence type="ECO:0000255" key="1">
    <source>
        <dbReference type="HAMAP-Rule" id="MF_00713"/>
    </source>
</evidence>
<sequence length="491" mass="54943">MKNQDQALIFEVSKEGRIGYSLPKLDVEEVKLEDVFESDYIRVEDAELPEVSELDIMRHYTALSNRNHGVDSGFYPLGSCTMKYNPKINESVARFAGFANIHPLQDEKTVQGAMELMYDLQEHLIEITGMDTVTLQPAAGAHGEWTGLMLIRAYHEANGDFNRTKVIVPDSAHGTNPASATVAGFETITVKSNEHGLVDLEDLKRVVNEETAALMLTNPNTLGLFEENILEMAEIVHNAGGKLYYDGANLNAVLSQARPGDMGFDVVHLNLHKTFTGPHGGGGPGSGPVGVKADLIPYLPKPILEKTEDGYRFNYDRPEAIGRVKPFYGNFGINVRAYTYIRSMGPDGLRAVTEYAVLNANYMMRRLAPFYDLPFDRHCKHEFVLSGRRQKKLGVRTLDIAKRLLDFGYHPPTIYFPLNVEECIMIEPTETESKETLDGFIDKMIQIAKEVEENPEVVQEAPHTTVIKRLDETMAARKPVLRYEKPAPVQV</sequence>
<comment type="function">
    <text evidence="1">The glycine cleavage system catalyzes the degradation of glycine. The P protein binds the alpha-amino group of glycine through its pyridoxal phosphate cofactor; CO(2) is released and the remaining methylamine moiety is then transferred to the lipoamide cofactor of the H protein.</text>
</comment>
<comment type="catalytic activity">
    <reaction evidence="1">
        <text>N(6)-[(R)-lipoyl]-L-lysyl-[glycine-cleavage complex H protein] + glycine + H(+) = N(6)-[(R)-S(8)-aminomethyldihydrolipoyl]-L-lysyl-[glycine-cleavage complex H protein] + CO2</text>
        <dbReference type="Rhea" id="RHEA:24304"/>
        <dbReference type="Rhea" id="RHEA-COMP:10494"/>
        <dbReference type="Rhea" id="RHEA-COMP:10495"/>
        <dbReference type="ChEBI" id="CHEBI:15378"/>
        <dbReference type="ChEBI" id="CHEBI:16526"/>
        <dbReference type="ChEBI" id="CHEBI:57305"/>
        <dbReference type="ChEBI" id="CHEBI:83099"/>
        <dbReference type="ChEBI" id="CHEBI:83143"/>
        <dbReference type="EC" id="1.4.4.2"/>
    </reaction>
</comment>
<comment type="cofactor">
    <cofactor evidence="1">
        <name>pyridoxal 5'-phosphate</name>
        <dbReference type="ChEBI" id="CHEBI:597326"/>
    </cofactor>
</comment>
<comment type="subunit">
    <text evidence="1">The glycine cleavage system is composed of four proteins: P, T, L and H. In this organism, the P 'protein' is a heterodimer of two subunits.</text>
</comment>
<comment type="similarity">
    <text evidence="1">Belongs to the GcvP family. C-terminal subunit subfamily.</text>
</comment>
<feature type="chain" id="PRO_0000166995" description="Probable glycine dehydrogenase (decarboxylating) subunit 2">
    <location>
        <begin position="1"/>
        <end position="491"/>
    </location>
</feature>
<feature type="modified residue" description="N6-(pyridoxal phosphate)lysine" evidence="1">
    <location>
        <position position="273"/>
    </location>
</feature>
<reference key="1">
    <citation type="journal article" date="2004" name="Nucleic Acids Res.">
        <title>The genome sequence of Bacillus cereus ATCC 10987 reveals metabolic adaptations and a large plasmid related to Bacillus anthracis pXO1.</title>
        <authorList>
            <person name="Rasko D.A."/>
            <person name="Ravel J."/>
            <person name="Oekstad O.A."/>
            <person name="Helgason E."/>
            <person name="Cer R.Z."/>
            <person name="Jiang L."/>
            <person name="Shores K.A."/>
            <person name="Fouts D.E."/>
            <person name="Tourasse N.J."/>
            <person name="Angiuoli S.V."/>
            <person name="Kolonay J.F."/>
            <person name="Nelson W.C."/>
            <person name="Kolstoe A.-B."/>
            <person name="Fraser C.M."/>
            <person name="Read T.D."/>
        </authorList>
    </citation>
    <scope>NUCLEOTIDE SEQUENCE [LARGE SCALE GENOMIC DNA]</scope>
    <source>
        <strain>ATCC 10987 / NRS 248</strain>
    </source>
</reference>
<keyword id="KW-0560">Oxidoreductase</keyword>
<keyword id="KW-0663">Pyridoxal phosphate</keyword>
<gene>
    <name evidence="1" type="primary">gcvPB</name>
    <name type="ordered locus">BCE_4303</name>
</gene>
<proteinExistence type="inferred from homology"/>
<accession>P62029</accession>
<protein>
    <recommendedName>
        <fullName evidence="1">Probable glycine dehydrogenase (decarboxylating) subunit 2</fullName>
        <ecNumber evidence="1">1.4.4.2</ecNumber>
    </recommendedName>
    <alternativeName>
        <fullName evidence="1">Glycine cleavage system P-protein subunit 2</fullName>
    </alternativeName>
    <alternativeName>
        <fullName evidence="1">Glycine decarboxylase subunit 2</fullName>
    </alternativeName>
    <alternativeName>
        <fullName evidence="1">Glycine dehydrogenase (aminomethyl-transferring) subunit 2</fullName>
    </alternativeName>
</protein>
<organism>
    <name type="scientific">Bacillus cereus (strain ATCC 10987 / NRS 248)</name>
    <dbReference type="NCBI Taxonomy" id="222523"/>
    <lineage>
        <taxon>Bacteria</taxon>
        <taxon>Bacillati</taxon>
        <taxon>Bacillota</taxon>
        <taxon>Bacilli</taxon>
        <taxon>Bacillales</taxon>
        <taxon>Bacillaceae</taxon>
        <taxon>Bacillus</taxon>
        <taxon>Bacillus cereus group</taxon>
    </lineage>
</organism>